<feature type="chain" id="PRO_0000091209" description="Elongation factor G 1">
    <location>
        <begin position="1"/>
        <end position="698"/>
    </location>
</feature>
<feature type="domain" description="tr-type G">
    <location>
        <begin position="8"/>
        <end position="290"/>
    </location>
</feature>
<feature type="binding site" evidence="1">
    <location>
        <begin position="17"/>
        <end position="24"/>
    </location>
    <ligand>
        <name>GTP</name>
        <dbReference type="ChEBI" id="CHEBI:37565"/>
    </ligand>
</feature>
<feature type="binding site" evidence="1">
    <location>
        <begin position="88"/>
        <end position="92"/>
    </location>
    <ligand>
        <name>GTP</name>
        <dbReference type="ChEBI" id="CHEBI:37565"/>
    </ligand>
</feature>
<feature type="binding site" evidence="1">
    <location>
        <begin position="142"/>
        <end position="145"/>
    </location>
    <ligand>
        <name>GTP</name>
        <dbReference type="ChEBI" id="CHEBI:37565"/>
    </ligand>
</feature>
<accession>Q8EK71</accession>
<keyword id="KW-0963">Cytoplasm</keyword>
<keyword id="KW-0251">Elongation factor</keyword>
<keyword id="KW-0342">GTP-binding</keyword>
<keyword id="KW-0547">Nucleotide-binding</keyword>
<keyword id="KW-0648">Protein biosynthesis</keyword>
<keyword id="KW-1185">Reference proteome</keyword>
<protein>
    <recommendedName>
        <fullName evidence="1">Elongation factor G 1</fullName>
        <shortName evidence="1">EF-G 1</shortName>
    </recommendedName>
</protein>
<evidence type="ECO:0000255" key="1">
    <source>
        <dbReference type="HAMAP-Rule" id="MF_00054"/>
    </source>
</evidence>
<comment type="function">
    <text evidence="1">Catalyzes the GTP-dependent ribosomal translocation step during translation elongation. During this step, the ribosome changes from the pre-translocational (PRE) to the post-translocational (POST) state as the newly formed A-site-bound peptidyl-tRNA and P-site-bound deacylated tRNA move to the P and E sites, respectively. Catalyzes the coordinated movement of the two tRNA molecules, the mRNA and conformational changes in the ribosome.</text>
</comment>
<comment type="subcellular location">
    <subcellularLocation>
        <location evidence="1">Cytoplasm</location>
    </subcellularLocation>
</comment>
<comment type="similarity">
    <text evidence="1">Belongs to the TRAFAC class translation factor GTPase superfamily. Classic translation factor GTPase family. EF-G/EF-2 subfamily.</text>
</comment>
<organism>
    <name type="scientific">Shewanella oneidensis (strain ATCC 700550 / JCM 31522 / CIP 106686 / LMG 19005 / NCIMB 14063 / MR-1)</name>
    <dbReference type="NCBI Taxonomy" id="211586"/>
    <lineage>
        <taxon>Bacteria</taxon>
        <taxon>Pseudomonadati</taxon>
        <taxon>Pseudomonadota</taxon>
        <taxon>Gammaproteobacteria</taxon>
        <taxon>Alteromonadales</taxon>
        <taxon>Shewanellaceae</taxon>
        <taxon>Shewanella</taxon>
    </lineage>
</organism>
<name>EFG1_SHEON</name>
<reference key="1">
    <citation type="journal article" date="2002" name="Nat. Biotechnol.">
        <title>Genome sequence of the dissimilatory metal ion-reducing bacterium Shewanella oneidensis.</title>
        <authorList>
            <person name="Heidelberg J.F."/>
            <person name="Paulsen I.T."/>
            <person name="Nelson K.E."/>
            <person name="Gaidos E.J."/>
            <person name="Nelson W.C."/>
            <person name="Read T.D."/>
            <person name="Eisen J.A."/>
            <person name="Seshadri R."/>
            <person name="Ward N.L."/>
            <person name="Methe B.A."/>
            <person name="Clayton R.A."/>
            <person name="Meyer T."/>
            <person name="Tsapin A."/>
            <person name="Scott J."/>
            <person name="Beanan M.J."/>
            <person name="Brinkac L.M."/>
            <person name="Daugherty S.C."/>
            <person name="DeBoy R.T."/>
            <person name="Dodson R.J."/>
            <person name="Durkin A.S."/>
            <person name="Haft D.H."/>
            <person name="Kolonay J.F."/>
            <person name="Madupu R."/>
            <person name="Peterson J.D."/>
            <person name="Umayam L.A."/>
            <person name="White O."/>
            <person name="Wolf A.M."/>
            <person name="Vamathevan J.J."/>
            <person name="Weidman J.F."/>
            <person name="Impraim M."/>
            <person name="Lee K."/>
            <person name="Berry K.J."/>
            <person name="Lee C."/>
            <person name="Mueller J."/>
            <person name="Khouri H.M."/>
            <person name="Gill J."/>
            <person name="Utterback T.R."/>
            <person name="McDonald L.A."/>
            <person name="Feldblyum T.V."/>
            <person name="Smith H.O."/>
            <person name="Venter J.C."/>
            <person name="Nealson K.H."/>
            <person name="Fraser C.M."/>
        </authorList>
    </citation>
    <scope>NUCLEOTIDE SEQUENCE [LARGE SCALE GENOMIC DNA]</scope>
    <source>
        <strain>ATCC 700550 / JCM 31522 / CIP 106686 / LMG 19005 / NCIMB 14063 / MR-1</strain>
    </source>
</reference>
<dbReference type="EMBL" id="AE014299">
    <property type="protein sequence ID" value="AAN53313.1"/>
    <property type="molecule type" value="Genomic_DNA"/>
</dbReference>
<dbReference type="RefSeq" id="NP_715868.1">
    <property type="nucleotide sequence ID" value="NC_004347.2"/>
</dbReference>
<dbReference type="RefSeq" id="WP_011070614.1">
    <property type="nucleotide sequence ID" value="NC_004347.2"/>
</dbReference>
<dbReference type="SMR" id="Q8EK71"/>
<dbReference type="STRING" id="211586.SO_0228"/>
<dbReference type="PaxDb" id="211586-SO_0228"/>
<dbReference type="KEGG" id="son:SO_0228"/>
<dbReference type="PATRIC" id="fig|211586.12.peg.216"/>
<dbReference type="eggNOG" id="COG0480">
    <property type="taxonomic scope" value="Bacteria"/>
</dbReference>
<dbReference type="HOGENOM" id="CLU_002794_4_1_6"/>
<dbReference type="OrthoDB" id="9804431at2"/>
<dbReference type="PhylomeDB" id="Q8EK71"/>
<dbReference type="BioCyc" id="SONE211586:G1GMP-217-MONOMER"/>
<dbReference type="Proteomes" id="UP000008186">
    <property type="component" value="Chromosome"/>
</dbReference>
<dbReference type="GO" id="GO:0005829">
    <property type="term" value="C:cytosol"/>
    <property type="evidence" value="ECO:0000318"/>
    <property type="project" value="GO_Central"/>
</dbReference>
<dbReference type="GO" id="GO:0005525">
    <property type="term" value="F:GTP binding"/>
    <property type="evidence" value="ECO:0007669"/>
    <property type="project" value="UniProtKB-UniRule"/>
</dbReference>
<dbReference type="GO" id="GO:0003924">
    <property type="term" value="F:GTPase activity"/>
    <property type="evidence" value="ECO:0007669"/>
    <property type="project" value="InterPro"/>
</dbReference>
<dbReference type="GO" id="GO:0097216">
    <property type="term" value="F:guanosine tetraphosphate binding"/>
    <property type="evidence" value="ECO:0007669"/>
    <property type="project" value="UniProtKB-ARBA"/>
</dbReference>
<dbReference type="GO" id="GO:0003746">
    <property type="term" value="F:translation elongation factor activity"/>
    <property type="evidence" value="ECO:0007669"/>
    <property type="project" value="UniProtKB-UniRule"/>
</dbReference>
<dbReference type="GO" id="GO:0032790">
    <property type="term" value="P:ribosome disassembly"/>
    <property type="evidence" value="ECO:0000318"/>
    <property type="project" value="GO_Central"/>
</dbReference>
<dbReference type="CDD" id="cd01886">
    <property type="entry name" value="EF-G"/>
    <property type="match status" value="1"/>
</dbReference>
<dbReference type="CDD" id="cd16262">
    <property type="entry name" value="EFG_III"/>
    <property type="match status" value="1"/>
</dbReference>
<dbReference type="CDD" id="cd01434">
    <property type="entry name" value="EFG_mtEFG1_IV"/>
    <property type="match status" value="1"/>
</dbReference>
<dbReference type="CDD" id="cd03713">
    <property type="entry name" value="EFG_mtEFG_C"/>
    <property type="match status" value="1"/>
</dbReference>
<dbReference type="CDD" id="cd04088">
    <property type="entry name" value="EFG_mtEFG_II"/>
    <property type="match status" value="1"/>
</dbReference>
<dbReference type="FunFam" id="2.40.30.10:FF:000006">
    <property type="entry name" value="Elongation factor G"/>
    <property type="match status" value="1"/>
</dbReference>
<dbReference type="FunFam" id="3.30.230.10:FF:000003">
    <property type="entry name" value="Elongation factor G"/>
    <property type="match status" value="1"/>
</dbReference>
<dbReference type="FunFam" id="3.30.70.240:FF:000001">
    <property type="entry name" value="Elongation factor G"/>
    <property type="match status" value="1"/>
</dbReference>
<dbReference type="FunFam" id="3.30.70.870:FF:000001">
    <property type="entry name" value="Elongation factor G"/>
    <property type="match status" value="1"/>
</dbReference>
<dbReference type="FunFam" id="3.40.50.300:FF:000029">
    <property type="entry name" value="Elongation factor G"/>
    <property type="match status" value="1"/>
</dbReference>
<dbReference type="Gene3D" id="3.30.230.10">
    <property type="match status" value="1"/>
</dbReference>
<dbReference type="Gene3D" id="3.30.70.240">
    <property type="match status" value="1"/>
</dbReference>
<dbReference type="Gene3D" id="3.30.70.870">
    <property type="entry name" value="Elongation Factor G (Translational Gtpase), domain 3"/>
    <property type="match status" value="1"/>
</dbReference>
<dbReference type="Gene3D" id="3.40.50.300">
    <property type="entry name" value="P-loop containing nucleotide triphosphate hydrolases"/>
    <property type="match status" value="1"/>
</dbReference>
<dbReference type="Gene3D" id="2.40.30.10">
    <property type="entry name" value="Translation factors"/>
    <property type="match status" value="1"/>
</dbReference>
<dbReference type="HAMAP" id="MF_00054_B">
    <property type="entry name" value="EF_G_EF_2_B"/>
    <property type="match status" value="1"/>
</dbReference>
<dbReference type="InterPro" id="IPR041095">
    <property type="entry name" value="EFG_II"/>
</dbReference>
<dbReference type="InterPro" id="IPR009022">
    <property type="entry name" value="EFG_III"/>
</dbReference>
<dbReference type="InterPro" id="IPR035647">
    <property type="entry name" value="EFG_III/V"/>
</dbReference>
<dbReference type="InterPro" id="IPR047872">
    <property type="entry name" value="EFG_IV"/>
</dbReference>
<dbReference type="InterPro" id="IPR035649">
    <property type="entry name" value="EFG_V"/>
</dbReference>
<dbReference type="InterPro" id="IPR000640">
    <property type="entry name" value="EFG_V-like"/>
</dbReference>
<dbReference type="InterPro" id="IPR004161">
    <property type="entry name" value="EFTu-like_2"/>
</dbReference>
<dbReference type="InterPro" id="IPR031157">
    <property type="entry name" value="G_TR_CS"/>
</dbReference>
<dbReference type="InterPro" id="IPR027417">
    <property type="entry name" value="P-loop_NTPase"/>
</dbReference>
<dbReference type="InterPro" id="IPR020568">
    <property type="entry name" value="Ribosomal_Su5_D2-typ_SF"/>
</dbReference>
<dbReference type="InterPro" id="IPR014721">
    <property type="entry name" value="Ribsml_uS5_D2-typ_fold_subgr"/>
</dbReference>
<dbReference type="InterPro" id="IPR005225">
    <property type="entry name" value="Small_GTP-bd"/>
</dbReference>
<dbReference type="InterPro" id="IPR000795">
    <property type="entry name" value="T_Tr_GTP-bd_dom"/>
</dbReference>
<dbReference type="InterPro" id="IPR009000">
    <property type="entry name" value="Transl_B-barrel_sf"/>
</dbReference>
<dbReference type="InterPro" id="IPR004540">
    <property type="entry name" value="Transl_elong_EFG/EF2"/>
</dbReference>
<dbReference type="InterPro" id="IPR005517">
    <property type="entry name" value="Transl_elong_EFG/EF2_IV"/>
</dbReference>
<dbReference type="NCBIfam" id="TIGR00484">
    <property type="entry name" value="EF-G"/>
    <property type="match status" value="1"/>
</dbReference>
<dbReference type="NCBIfam" id="NF009381">
    <property type="entry name" value="PRK12740.1-5"/>
    <property type="match status" value="1"/>
</dbReference>
<dbReference type="NCBIfam" id="TIGR00231">
    <property type="entry name" value="small_GTP"/>
    <property type="match status" value="1"/>
</dbReference>
<dbReference type="PANTHER" id="PTHR43261:SF1">
    <property type="entry name" value="RIBOSOME-RELEASING FACTOR 2, MITOCHONDRIAL"/>
    <property type="match status" value="1"/>
</dbReference>
<dbReference type="PANTHER" id="PTHR43261">
    <property type="entry name" value="TRANSLATION ELONGATION FACTOR G-RELATED"/>
    <property type="match status" value="1"/>
</dbReference>
<dbReference type="Pfam" id="PF00679">
    <property type="entry name" value="EFG_C"/>
    <property type="match status" value="1"/>
</dbReference>
<dbReference type="Pfam" id="PF14492">
    <property type="entry name" value="EFG_III"/>
    <property type="match status" value="1"/>
</dbReference>
<dbReference type="Pfam" id="PF03764">
    <property type="entry name" value="EFG_IV"/>
    <property type="match status" value="1"/>
</dbReference>
<dbReference type="Pfam" id="PF00009">
    <property type="entry name" value="GTP_EFTU"/>
    <property type="match status" value="1"/>
</dbReference>
<dbReference type="Pfam" id="PF03144">
    <property type="entry name" value="GTP_EFTU_D2"/>
    <property type="match status" value="1"/>
</dbReference>
<dbReference type="PRINTS" id="PR00315">
    <property type="entry name" value="ELONGATNFCT"/>
</dbReference>
<dbReference type="SMART" id="SM00838">
    <property type="entry name" value="EFG_C"/>
    <property type="match status" value="1"/>
</dbReference>
<dbReference type="SMART" id="SM00889">
    <property type="entry name" value="EFG_IV"/>
    <property type="match status" value="1"/>
</dbReference>
<dbReference type="SUPFAM" id="SSF54980">
    <property type="entry name" value="EF-G C-terminal domain-like"/>
    <property type="match status" value="2"/>
</dbReference>
<dbReference type="SUPFAM" id="SSF52540">
    <property type="entry name" value="P-loop containing nucleoside triphosphate hydrolases"/>
    <property type="match status" value="1"/>
</dbReference>
<dbReference type="SUPFAM" id="SSF54211">
    <property type="entry name" value="Ribosomal protein S5 domain 2-like"/>
    <property type="match status" value="1"/>
</dbReference>
<dbReference type="SUPFAM" id="SSF50447">
    <property type="entry name" value="Translation proteins"/>
    <property type="match status" value="1"/>
</dbReference>
<dbReference type="PROSITE" id="PS00301">
    <property type="entry name" value="G_TR_1"/>
    <property type="match status" value="1"/>
</dbReference>
<dbReference type="PROSITE" id="PS51722">
    <property type="entry name" value="G_TR_2"/>
    <property type="match status" value="1"/>
</dbReference>
<proteinExistence type="inferred from homology"/>
<sequence>MARTTPIERYRNIGICAHVDAGKTTTTERVLFYTGLSHKIGEVHDGAATTDWMVQEQERGITITSAAVTTFWRGMDAQFTEHRINIIDTPGHVDFTIEVERSLRVLDGAVVVFCGASGVEPQSETVWRQADKYRVPRIVFVNKMDRAGADFERVVKQIRTRLGATCVPIQLNIGAEENFTGVIDLIKMKAINWNEADQGMTFSYEAIPAHLTAKAEEMHEFLVEAAAEASDELMDKYLEEGTLSEEEIKKALRQRTINNEIVLATCGSAFKNKGVQAVLDAVVEFLPAPVDVPPIKGIDDNEQEVERPSDDNAPFAALAFKIATDPFVGTLTFIRVYSGVLESGSGVYNSVKQKRERIGRIVQMHANDRTELKEVRAGDIAAAIGLKEVTTGDTLCDNDHKVILERMEFPEPVITIAVEPKSKADQDKMGIALQKLAAEDPSFRVETDEESSQTLISGMGELHLDIIVDRMRREFGVECNVGKPQVAYRETIRGSVEAEGKFVRQSGGRGQFGHVWLKLEPNEEGAGYEFINAIVGGVVPREFIPAVDKGIQEQMKNGVLAGFPVLDVKVTLFDGSYHDVDSNEMAFKIAGSMGFKKGALEAKPVLLEPCMKVEVTTPENYMGDVVGDLNRRRGLIEGMDDGFGGIKIIHAVVPLSEMFGYATDLRSATQGRASYSMEFLKYTDAPQNIAKAIIESRS</sequence>
<gene>
    <name evidence="1" type="primary">fusA</name>
    <name type="synonym">fusA-1</name>
    <name type="ordered locus">SO_0228</name>
</gene>